<protein>
    <recommendedName>
        <fullName evidence="1">Triosephosphate isomerase</fullName>
        <shortName evidence="1">TIM</shortName>
        <shortName evidence="1">TPI</shortName>
        <ecNumber evidence="1">5.3.1.1</ecNumber>
    </recommendedName>
    <alternativeName>
        <fullName evidence="1">Triose-phosphate isomerase</fullName>
    </alternativeName>
</protein>
<gene>
    <name evidence="1" type="primary">tpiA</name>
    <name type="ordered locus">TTE1760</name>
</gene>
<organism>
    <name type="scientific">Caldanaerobacter subterraneus subsp. tengcongensis (strain DSM 15242 / JCM 11007 / NBRC 100824 / MB4)</name>
    <name type="common">Thermoanaerobacter tengcongensis</name>
    <dbReference type="NCBI Taxonomy" id="273068"/>
    <lineage>
        <taxon>Bacteria</taxon>
        <taxon>Bacillati</taxon>
        <taxon>Bacillota</taxon>
        <taxon>Clostridia</taxon>
        <taxon>Thermoanaerobacterales</taxon>
        <taxon>Thermoanaerobacteraceae</taxon>
        <taxon>Caldanaerobacter</taxon>
    </lineage>
</organism>
<reference key="1">
    <citation type="journal article" date="2002" name="Genome Res.">
        <title>A complete sequence of the T. tengcongensis genome.</title>
        <authorList>
            <person name="Bao Q."/>
            <person name="Tian Y."/>
            <person name="Li W."/>
            <person name="Xu Z."/>
            <person name="Xuan Z."/>
            <person name="Hu S."/>
            <person name="Dong W."/>
            <person name="Yang J."/>
            <person name="Chen Y."/>
            <person name="Xue Y."/>
            <person name="Xu Y."/>
            <person name="Lai X."/>
            <person name="Huang L."/>
            <person name="Dong X."/>
            <person name="Ma Y."/>
            <person name="Ling L."/>
            <person name="Tan H."/>
            <person name="Chen R."/>
            <person name="Wang J."/>
            <person name="Yu J."/>
            <person name="Yang H."/>
        </authorList>
    </citation>
    <scope>NUCLEOTIDE SEQUENCE [LARGE SCALE GENOMIC DNA]</scope>
    <source>
        <strain>DSM 15242 / JCM 11007 / NBRC 100824 / MB4</strain>
    </source>
</reference>
<sequence>MRRPIIAGNWKMHKTPSEAVKLVEELIPLVKDAKAEVVVIPPFVDLTEVARVIKGTNILLGAQNMFWEEKGAYTGEISPVMLKEIGVTYVVIGHSERRQYFKETDEMVNKKVLSALSHDLKPIVCVGESLSQREEGKTYDVVLTQTREALKGVSEEDITKVVIAYEPVWAIGTGKNATPQDANEVIKAIRNTIAELYGKDKAEMVRIQYGGSVKPDNISGFMAESDIDGALVGGASLVAEDFAKIVNY</sequence>
<proteinExistence type="inferred from homology"/>
<keyword id="KW-0963">Cytoplasm</keyword>
<keyword id="KW-0312">Gluconeogenesis</keyword>
<keyword id="KW-0324">Glycolysis</keyword>
<keyword id="KW-0413">Isomerase</keyword>
<keyword id="KW-1185">Reference proteome</keyword>
<dbReference type="EC" id="5.3.1.1" evidence="1"/>
<dbReference type="EMBL" id="AE008691">
    <property type="protein sequence ID" value="AAM24954.1"/>
    <property type="molecule type" value="Genomic_DNA"/>
</dbReference>
<dbReference type="RefSeq" id="WP_011025956.1">
    <property type="nucleotide sequence ID" value="NZ_JANUCV010000001.1"/>
</dbReference>
<dbReference type="SMR" id="Q8R966"/>
<dbReference type="STRING" id="273068.TTE1760"/>
<dbReference type="KEGG" id="tte:TTE1760"/>
<dbReference type="eggNOG" id="COG0149">
    <property type="taxonomic scope" value="Bacteria"/>
</dbReference>
<dbReference type="HOGENOM" id="CLU_024251_2_3_9"/>
<dbReference type="OrthoDB" id="9809429at2"/>
<dbReference type="UniPathway" id="UPA00109">
    <property type="reaction ID" value="UER00189"/>
</dbReference>
<dbReference type="UniPathway" id="UPA00138"/>
<dbReference type="Proteomes" id="UP000000555">
    <property type="component" value="Chromosome"/>
</dbReference>
<dbReference type="GO" id="GO:0005829">
    <property type="term" value="C:cytosol"/>
    <property type="evidence" value="ECO:0007669"/>
    <property type="project" value="TreeGrafter"/>
</dbReference>
<dbReference type="GO" id="GO:0004807">
    <property type="term" value="F:triose-phosphate isomerase activity"/>
    <property type="evidence" value="ECO:0007669"/>
    <property type="project" value="UniProtKB-UniRule"/>
</dbReference>
<dbReference type="GO" id="GO:0006094">
    <property type="term" value="P:gluconeogenesis"/>
    <property type="evidence" value="ECO:0007669"/>
    <property type="project" value="UniProtKB-UniRule"/>
</dbReference>
<dbReference type="GO" id="GO:0046166">
    <property type="term" value="P:glyceraldehyde-3-phosphate biosynthetic process"/>
    <property type="evidence" value="ECO:0007669"/>
    <property type="project" value="TreeGrafter"/>
</dbReference>
<dbReference type="GO" id="GO:0019563">
    <property type="term" value="P:glycerol catabolic process"/>
    <property type="evidence" value="ECO:0007669"/>
    <property type="project" value="TreeGrafter"/>
</dbReference>
<dbReference type="GO" id="GO:0006096">
    <property type="term" value="P:glycolytic process"/>
    <property type="evidence" value="ECO:0007669"/>
    <property type="project" value="UniProtKB-UniRule"/>
</dbReference>
<dbReference type="CDD" id="cd00311">
    <property type="entry name" value="TIM"/>
    <property type="match status" value="1"/>
</dbReference>
<dbReference type="FunFam" id="3.20.20.70:FF:000016">
    <property type="entry name" value="Triosephosphate isomerase"/>
    <property type="match status" value="1"/>
</dbReference>
<dbReference type="Gene3D" id="3.20.20.70">
    <property type="entry name" value="Aldolase class I"/>
    <property type="match status" value="1"/>
</dbReference>
<dbReference type="HAMAP" id="MF_00147_B">
    <property type="entry name" value="TIM_B"/>
    <property type="match status" value="1"/>
</dbReference>
<dbReference type="InterPro" id="IPR013785">
    <property type="entry name" value="Aldolase_TIM"/>
</dbReference>
<dbReference type="InterPro" id="IPR035990">
    <property type="entry name" value="TIM_sf"/>
</dbReference>
<dbReference type="InterPro" id="IPR022896">
    <property type="entry name" value="TrioseP_Isoase_bac/euk"/>
</dbReference>
<dbReference type="InterPro" id="IPR000652">
    <property type="entry name" value="Triosephosphate_isomerase"/>
</dbReference>
<dbReference type="InterPro" id="IPR020861">
    <property type="entry name" value="Triosephosphate_isomerase_AS"/>
</dbReference>
<dbReference type="NCBIfam" id="TIGR00419">
    <property type="entry name" value="tim"/>
    <property type="match status" value="1"/>
</dbReference>
<dbReference type="PANTHER" id="PTHR21139">
    <property type="entry name" value="TRIOSEPHOSPHATE ISOMERASE"/>
    <property type="match status" value="1"/>
</dbReference>
<dbReference type="PANTHER" id="PTHR21139:SF42">
    <property type="entry name" value="TRIOSEPHOSPHATE ISOMERASE"/>
    <property type="match status" value="1"/>
</dbReference>
<dbReference type="Pfam" id="PF00121">
    <property type="entry name" value="TIM"/>
    <property type="match status" value="1"/>
</dbReference>
<dbReference type="SUPFAM" id="SSF51351">
    <property type="entry name" value="Triosephosphate isomerase (TIM)"/>
    <property type="match status" value="1"/>
</dbReference>
<dbReference type="PROSITE" id="PS00171">
    <property type="entry name" value="TIM_1"/>
    <property type="match status" value="1"/>
</dbReference>
<dbReference type="PROSITE" id="PS51440">
    <property type="entry name" value="TIM_2"/>
    <property type="match status" value="1"/>
</dbReference>
<comment type="function">
    <text evidence="1">Involved in the gluconeogenesis. Catalyzes stereospecifically the conversion of dihydroxyacetone phosphate (DHAP) to D-glyceraldehyde-3-phosphate (G3P).</text>
</comment>
<comment type="catalytic activity">
    <reaction evidence="1">
        <text>D-glyceraldehyde 3-phosphate = dihydroxyacetone phosphate</text>
        <dbReference type="Rhea" id="RHEA:18585"/>
        <dbReference type="ChEBI" id="CHEBI:57642"/>
        <dbReference type="ChEBI" id="CHEBI:59776"/>
        <dbReference type="EC" id="5.3.1.1"/>
    </reaction>
</comment>
<comment type="pathway">
    <text evidence="1">Carbohydrate biosynthesis; gluconeogenesis.</text>
</comment>
<comment type="pathway">
    <text evidence="1">Carbohydrate degradation; glycolysis; D-glyceraldehyde 3-phosphate from glycerone phosphate: step 1/1.</text>
</comment>
<comment type="subunit">
    <text evidence="1">Homodimer.</text>
</comment>
<comment type="subcellular location">
    <subcellularLocation>
        <location evidence="1">Cytoplasm</location>
    </subcellularLocation>
</comment>
<comment type="similarity">
    <text evidence="1">Belongs to the triosephosphate isomerase family.</text>
</comment>
<accession>Q8R966</accession>
<feature type="chain" id="PRO_0000090307" description="Triosephosphate isomerase">
    <location>
        <begin position="1"/>
        <end position="248"/>
    </location>
</feature>
<feature type="active site" description="Electrophile" evidence="1">
    <location>
        <position position="94"/>
    </location>
</feature>
<feature type="active site" description="Proton acceptor" evidence="1">
    <location>
        <position position="166"/>
    </location>
</feature>
<feature type="binding site" evidence="1">
    <location>
        <begin position="9"/>
        <end position="11"/>
    </location>
    <ligand>
        <name>substrate</name>
    </ligand>
</feature>
<feature type="binding site" evidence="1">
    <location>
        <position position="172"/>
    </location>
    <ligand>
        <name>substrate</name>
    </ligand>
</feature>
<feature type="binding site" evidence="1">
    <location>
        <position position="212"/>
    </location>
    <ligand>
        <name>substrate</name>
    </ligand>
</feature>
<feature type="binding site" evidence="1">
    <location>
        <begin position="233"/>
        <end position="234"/>
    </location>
    <ligand>
        <name>substrate</name>
    </ligand>
</feature>
<name>TPIS_CALS4</name>
<evidence type="ECO:0000255" key="1">
    <source>
        <dbReference type="HAMAP-Rule" id="MF_00147"/>
    </source>
</evidence>